<keyword id="KW-0574">Periplasm</keyword>
<keyword id="KW-0732">Signal</keyword>
<feature type="signal peptide" evidence="1">
    <location>
        <begin position="1"/>
        <end position="21"/>
    </location>
</feature>
<feature type="propeptide" id="PRO_1000128933" evidence="1">
    <location>
        <begin position="22"/>
        <end position="56"/>
    </location>
</feature>
<feature type="chain" id="PRO_1000128934" description="Acid shock protein">
    <location>
        <begin position="57"/>
        <end position="83"/>
    </location>
</feature>
<feature type="region of interest" description="Disordered" evidence="2">
    <location>
        <begin position="22"/>
        <end position="83"/>
    </location>
</feature>
<feature type="compositionally biased region" description="Low complexity" evidence="2">
    <location>
        <begin position="22"/>
        <end position="40"/>
    </location>
</feature>
<feature type="compositionally biased region" description="Basic residues" evidence="2">
    <location>
        <begin position="57"/>
        <end position="70"/>
    </location>
</feature>
<feature type="compositionally biased region" description="Low complexity" evidence="2">
    <location>
        <begin position="71"/>
        <end position="83"/>
    </location>
</feature>
<name>ASR_SALHS</name>
<dbReference type="EMBL" id="CP001120">
    <property type="protein sequence ID" value="ACF70354.1"/>
    <property type="molecule type" value="Genomic_DNA"/>
</dbReference>
<dbReference type="RefSeq" id="WP_000756315.1">
    <property type="nucleotide sequence ID" value="NC_011083.1"/>
</dbReference>
<dbReference type="KEGG" id="seh:SeHA_C1655"/>
<dbReference type="HOGENOM" id="CLU_102486_2_1_6"/>
<dbReference type="Proteomes" id="UP000001866">
    <property type="component" value="Chromosome"/>
</dbReference>
<dbReference type="GO" id="GO:0042597">
    <property type="term" value="C:periplasmic space"/>
    <property type="evidence" value="ECO:0007669"/>
    <property type="project" value="UniProtKB-SubCell"/>
</dbReference>
<dbReference type="HAMAP" id="MF_00546">
    <property type="entry name" value="Asr"/>
    <property type="match status" value="1"/>
</dbReference>
<dbReference type="InterPro" id="IPR023497">
    <property type="entry name" value="Acid_shock"/>
</dbReference>
<dbReference type="NCBIfam" id="NF033636">
    <property type="entry name" value="acid_shock_Asr"/>
    <property type="match status" value="1"/>
</dbReference>
<dbReference type="Pfam" id="PF06392">
    <property type="entry name" value="Asr"/>
    <property type="match status" value="1"/>
</dbReference>
<accession>B4THR7</accession>
<protein>
    <recommendedName>
        <fullName evidence="1">Acid shock protein</fullName>
    </recommendedName>
</protein>
<proteinExistence type="inferred from homology"/>
<evidence type="ECO:0000255" key="1">
    <source>
        <dbReference type="HAMAP-Rule" id="MF_00546"/>
    </source>
</evidence>
<evidence type="ECO:0000256" key="2">
    <source>
        <dbReference type="SAM" id="MobiDB-lite"/>
    </source>
</evidence>
<organism>
    <name type="scientific">Salmonella heidelberg (strain SL476)</name>
    <dbReference type="NCBI Taxonomy" id="454169"/>
    <lineage>
        <taxon>Bacteria</taxon>
        <taxon>Pseudomonadati</taxon>
        <taxon>Pseudomonadota</taxon>
        <taxon>Gammaproteobacteria</taxon>
        <taxon>Enterobacterales</taxon>
        <taxon>Enterobacteriaceae</taxon>
        <taxon>Salmonella</taxon>
    </lineage>
</organism>
<comment type="function">
    <text evidence="1">Required for growth and/or survival at acidic conditions.</text>
</comment>
<comment type="subcellular location">
    <subcellularLocation>
        <location evidence="1">Periplasm</location>
    </subcellularLocation>
</comment>
<comment type="PTM">
    <text evidence="1">Proteolytic processing gives rise to the active protein.</text>
</comment>
<comment type="similarity">
    <text evidence="1">Belongs to the Asr family.</text>
</comment>
<reference key="1">
    <citation type="journal article" date="2011" name="J. Bacteriol.">
        <title>Comparative genomics of 28 Salmonella enterica isolates: evidence for CRISPR-mediated adaptive sublineage evolution.</title>
        <authorList>
            <person name="Fricke W.F."/>
            <person name="Mammel M.K."/>
            <person name="McDermott P.F."/>
            <person name="Tartera C."/>
            <person name="White D.G."/>
            <person name="Leclerc J.E."/>
            <person name="Ravel J."/>
            <person name="Cebula T.A."/>
        </authorList>
    </citation>
    <scope>NUCLEOTIDE SEQUENCE [LARGE SCALE GENOMIC DNA]</scope>
    <source>
        <strain>SL476</strain>
    </source>
</reference>
<gene>
    <name evidence="1" type="primary">asr</name>
    <name type="ordered locus">SeHA_C1655</name>
</gene>
<sequence>MKKVLALVVAAAMGLSSAAFAAETATPAKTATPAKTTQNTQHHKKQHKKTVEQKAQAAKKHQKKDGKKAPAKSTSKTTSQPAA</sequence>